<gene>
    <name evidence="4" type="primary">OMT10</name>
</gene>
<name>OMT10_LOPWI</name>
<reference key="1">
    <citation type="journal article" date="2024" name="Mol. Plant">
        <title>The biosynthetic pathway of the hallucinogen mescaline and its heterologous reconstruction.</title>
        <authorList>
            <person name="Berman P."/>
            <person name="de Haro L.A."/>
            <person name="Cavaco A.-R."/>
            <person name="Panda S."/>
            <person name="Dong Y."/>
            <person name="Kuzmich N."/>
            <person name="Lichtenstein G."/>
            <person name="Peleg Y."/>
            <person name="Harat H."/>
            <person name="Jozwiak A."/>
            <person name="Cai J."/>
            <person name="Heinig U."/>
            <person name="Meir S."/>
            <person name="Rogachev I."/>
            <person name="Aharoni A."/>
        </authorList>
    </citation>
    <scope>NUCLEOTIDE SEQUENCE [MRNA]</scope>
    <scope>FUNCTION</scope>
    <scope>CATALYTIC ACTIVITY</scope>
    <scope>PATHWAY</scope>
    <source>
        <strain>cv. Rehovot 7</strain>
    </source>
</reference>
<proteinExistence type="evidence at protein level"/>
<feature type="chain" id="PRO_0000462561" description="O-methyltransferase 10">
    <location>
        <begin position="1"/>
        <end position="386"/>
    </location>
</feature>
<feature type="active site" description="Proton acceptor" evidence="2">
    <location>
        <position position="292"/>
    </location>
</feature>
<feature type="binding site" evidence="1">
    <location>
        <position position="207"/>
    </location>
    <ligand>
        <name>S-adenosyl-L-homocysteine</name>
        <dbReference type="ChEBI" id="CHEBI:57856"/>
    </ligand>
</feature>
<feature type="binding site" evidence="1">
    <location>
        <position position="231"/>
    </location>
    <ligand>
        <name>S-adenosyl-L-homocysteine</name>
        <dbReference type="ChEBI" id="CHEBI:57856"/>
    </ligand>
</feature>
<feature type="binding site" evidence="1">
    <location>
        <position position="254"/>
    </location>
    <ligand>
        <name>S-adenosyl-L-homocysteine</name>
        <dbReference type="ChEBI" id="CHEBI:57856"/>
    </ligand>
</feature>
<feature type="binding site" evidence="2">
    <location>
        <position position="254"/>
    </location>
    <ligand>
        <name>S-adenosyl-L-methionine</name>
        <dbReference type="ChEBI" id="CHEBI:59789"/>
    </ligand>
</feature>
<feature type="binding site" evidence="1">
    <location>
        <position position="274"/>
    </location>
    <ligand>
        <name>S-adenosyl-L-homocysteine</name>
        <dbReference type="ChEBI" id="CHEBI:57856"/>
    </ligand>
</feature>
<feature type="binding site" evidence="1">
    <location>
        <position position="288"/>
    </location>
    <ligand>
        <name>S-adenosyl-L-homocysteine</name>
        <dbReference type="ChEBI" id="CHEBI:57856"/>
    </ligand>
</feature>
<dbReference type="EC" id="2.1.1.-" evidence="2"/>
<dbReference type="PROSITE" id="PS51683">
    <property type="entry name" value="SAM_OMT_II"/>
    <property type="match status" value="1"/>
</dbReference>
<comment type="function">
    <text evidence="3">O-methyltransferase participating in the biosynthesis of natural products derived from phenylethylamine, including mescaline, a natural hallucinogen potentially used in psychotherapeutic treatments (PubMed:38835170). Catalyzes the O-methylation of mescaline para hydroxyl groups, using dopamine, 3,4-dihydroxy-5-methoxyphenethylamine, 3-hydroxy-4,5-dimethoxyphenethylamine and 4-hydroxy-3,5-dimethoxyphenethylamine as substrates (PubMed:38835170).</text>
</comment>
<comment type="catalytic activity">
    <reaction evidence="3">
        <text>dopamine + S-adenosyl-L-methionine = 4-methoxytyramine + S-adenosyl-L-homocysteine + H(+)</text>
        <dbReference type="Rhea" id="RHEA:81047"/>
        <dbReference type="ChEBI" id="CHEBI:15378"/>
        <dbReference type="ChEBI" id="CHEBI:57856"/>
        <dbReference type="ChEBI" id="CHEBI:59789"/>
        <dbReference type="ChEBI" id="CHEBI:59905"/>
        <dbReference type="ChEBI" id="CHEBI:192993"/>
    </reaction>
    <physiologicalReaction direction="left-to-right" evidence="3">
        <dbReference type="Rhea" id="RHEA:81048"/>
    </physiologicalReaction>
</comment>
<comment type="catalytic activity">
    <reaction evidence="3">
        <text>3,4-dihydroxy-5-methoxyphenethylamine + S-adenosyl-L-methionine = 3-hydroxy-4,5-dimethoxyphenethylamine + S-adenosyl-L-homocysteine + H(+)</text>
        <dbReference type="Rhea" id="RHEA:81051"/>
        <dbReference type="ChEBI" id="CHEBI:15378"/>
        <dbReference type="ChEBI" id="CHEBI:57856"/>
        <dbReference type="ChEBI" id="CHEBI:59789"/>
        <dbReference type="ChEBI" id="CHEBI:231763"/>
        <dbReference type="ChEBI" id="CHEBI:231769"/>
    </reaction>
    <physiologicalReaction direction="left-to-right" evidence="3">
        <dbReference type="Rhea" id="RHEA:81052"/>
    </physiologicalReaction>
</comment>
<comment type="catalytic activity">
    <reaction evidence="3">
        <text>3-hydroxy-4,5-dimethoxyphenethylamine + S-adenosyl-L-methionine = mescaline + S-adenosyl-L-homocysteine + H(+)</text>
        <dbReference type="Rhea" id="RHEA:81055"/>
        <dbReference type="ChEBI" id="CHEBI:15378"/>
        <dbReference type="ChEBI" id="CHEBI:57856"/>
        <dbReference type="ChEBI" id="CHEBI:59789"/>
        <dbReference type="ChEBI" id="CHEBI:231762"/>
        <dbReference type="ChEBI" id="CHEBI:231769"/>
    </reaction>
    <physiologicalReaction direction="left-to-right" evidence="3">
        <dbReference type="Rhea" id="RHEA:81056"/>
    </physiologicalReaction>
</comment>
<comment type="catalytic activity">
    <reaction evidence="3">
        <text>4-hydroxy-3,5-dimethoxyphenethylamine + S-adenosyl-L-methionine = mescaline + S-adenosyl-L-homocysteine + H(+)</text>
        <dbReference type="Rhea" id="RHEA:81059"/>
        <dbReference type="ChEBI" id="CHEBI:15378"/>
        <dbReference type="ChEBI" id="CHEBI:57856"/>
        <dbReference type="ChEBI" id="CHEBI:59789"/>
        <dbReference type="ChEBI" id="CHEBI:231762"/>
        <dbReference type="ChEBI" id="CHEBI:231768"/>
    </reaction>
    <physiologicalReaction direction="left-to-right" evidence="3">
        <dbReference type="Rhea" id="RHEA:81060"/>
    </physiologicalReaction>
</comment>
<comment type="pathway">
    <text evidence="3">Aromatic compound metabolism.</text>
</comment>
<comment type="pathway">
    <text evidence="3">Alkaloid biosynthesis.</text>
</comment>
<comment type="subunit">
    <text evidence="1">Homodimer.</text>
</comment>
<comment type="similarity">
    <text evidence="2">Belongs to the class I-like SAM-binding methyltransferase superfamily. Cation-independent O-methyltransferase family.</text>
</comment>
<keyword id="KW-0017">Alkaloid metabolism</keyword>
<keyword id="KW-0489">Methyltransferase</keyword>
<keyword id="KW-0949">S-adenosyl-L-methionine</keyword>
<keyword id="KW-0808">Transferase</keyword>
<sequence>MAEIPTSSNPSDDLETQKLNGNEEDYDHHHDEDPESDDENYEYALQIAEMLPFPMVMKTAIELDLLGIIATAGPDRQLSAAEIAAALPAAGNPDAPAMLDRMLYLLATYSVVTCTAVDGGASGGVVRKYGLAPVAKYFVSNKDGVSLGALISLNQGQAFLASWSKLKEAVLEGGIPFNKFHGMEVFHYQGTDPRFNEIFNKAMYDQSTYTIKKIVRRYKGFENIQRLVDVGGGLGHTLRVITSNYPSIKGINFDLPHVIQHAPTIPGVEHVGGDMFESIPNGDAIFMKCLLHDWSDEHCLKILKNCYKALPRKGKVIVVEMNMIEEPQTTPLAKAISQLDVGMMTQSPGGKERTRREFQTLAEAAGFAEFNPVCHVACFWVMEFLK</sequence>
<protein>
    <recommendedName>
        <fullName evidence="4">O-methyltransferase 10</fullName>
        <shortName evidence="4">LwOMT10</shortName>
        <ecNumber evidence="2">2.1.1.-</ecNumber>
    </recommendedName>
</protein>
<organism>
    <name type="scientific">Lophophora williamsii</name>
    <name type="common">Peyote</name>
    <name type="synonym">Echinocactus williamsii</name>
    <dbReference type="NCBI Taxonomy" id="130138"/>
    <lineage>
        <taxon>Eukaryota</taxon>
        <taxon>Viridiplantae</taxon>
        <taxon>Streptophyta</taxon>
        <taxon>Embryophyta</taxon>
        <taxon>Tracheophyta</taxon>
        <taxon>Spermatophyta</taxon>
        <taxon>Magnoliopsida</taxon>
        <taxon>eudicotyledons</taxon>
        <taxon>Gunneridae</taxon>
        <taxon>Pentapetalae</taxon>
        <taxon>Caryophyllales</taxon>
        <taxon>Cactineae</taxon>
        <taxon>Cactaceae</taxon>
        <taxon>Cactoideae</taxon>
        <taxon>Cacteae</taxon>
        <taxon>Lophophora</taxon>
    </lineage>
</organism>
<accession>P0DXJ7</accession>
<evidence type="ECO:0000250" key="1">
    <source>
        <dbReference type="UniProtKB" id="A0A166U5H3"/>
    </source>
</evidence>
<evidence type="ECO:0000255" key="2">
    <source>
        <dbReference type="PROSITE-ProRule" id="PRU01020"/>
    </source>
</evidence>
<evidence type="ECO:0000269" key="3">
    <source>
    </source>
</evidence>
<evidence type="ECO:0000303" key="4">
    <source>
    </source>
</evidence>